<dbReference type="EMBL" id="X03961">
    <property type="protein sequence ID" value="CAA27592.1"/>
    <property type="molecule type" value="Genomic_DNA"/>
</dbReference>
<dbReference type="PIR" id="S28087">
    <property type="entry name" value="S28087"/>
</dbReference>
<dbReference type="GO" id="GO:0030541">
    <property type="term" value="P:plasmid partitioning"/>
    <property type="evidence" value="ECO:0007669"/>
    <property type="project" value="UniProtKB-KW"/>
</dbReference>
<feature type="chain" id="PRO_0000150899" description="Trans-acting factor C">
    <location>
        <begin position="1"/>
        <end position="212"/>
    </location>
</feature>
<gene>
    <name type="primary">C</name>
</gene>
<protein>
    <recommendedName>
        <fullName>Trans-acting factor C</fullName>
    </recommendedName>
    <alternativeName>
        <fullName>REP2</fullName>
    </alternativeName>
</protein>
<comment type="function">
    <text>Plasmid partition require REP1, REP2, and a cis-acting DNA sequence (known as STB).</text>
</comment>
<reference key="1">
    <citation type="journal article" date="1986" name="Nucleic Acids Res.">
        <title>Sequence organization of the circular plasmid pKD1 from the yeast Kluyveromyces drosophilarum.</title>
        <authorList>
            <person name="Chen X.J."/>
            <person name="Saliola M."/>
            <person name="Falcone C."/>
            <person name="Bianchi M.M."/>
            <person name="Fukuhara H."/>
        </authorList>
    </citation>
    <scope>NUCLEOTIDE SEQUENCE [GENOMIC DNA]</scope>
    <source>
        <strain>ATCC 56496 / CBS 2105 / CLIB 601 / NRRL Y-8278</strain>
    </source>
</reference>
<name>REP2_KLULC</name>
<keyword id="KW-0614">Plasmid</keyword>
<keyword id="KW-0616">Plasmid partition</keyword>
<organism>
    <name type="scientific">Kluyveromyces lactis</name>
    <name type="common">Yeast</name>
    <name type="synonym">Candida sphaerica</name>
    <dbReference type="NCBI Taxonomy" id="28985"/>
    <lineage>
        <taxon>Eukaryota</taxon>
        <taxon>Fungi</taxon>
        <taxon>Dikarya</taxon>
        <taxon>Ascomycota</taxon>
        <taxon>Saccharomycotina</taxon>
        <taxon>Saccharomycetes</taxon>
        <taxon>Saccharomycetales</taxon>
        <taxon>Saccharomycetaceae</taxon>
        <taxon>Kluyveromyces</taxon>
    </lineage>
</organism>
<accession>P13779</accession>
<sequence>MPDNCHFVRSVDLLSVILLRLSTEVGLTLTTLPRHSKELILYHCTYEEHAVELSKPGLRKAGGKCSLFVDPEERENSPSPPIPPYQISEMPLHELLESGNAKLVPNPEFDLTDPDDFHKCFSVTYSALSLMVPYLPRAALKAARVFCKDHSILTTDMLDLNYLEELIEFSKETVNKIPARIPIEDMLLERGYVLPWVHGGTVKGGKLLTPND</sequence>
<geneLocation type="plasmid">
    <name>pKD1</name>
</geneLocation>
<proteinExistence type="predicted"/>